<evidence type="ECO:0000255" key="1">
    <source>
        <dbReference type="HAMAP-Rule" id="MF_00208"/>
    </source>
</evidence>
<proteinExistence type="inferred from homology"/>
<reference key="1">
    <citation type="journal article" date="2006" name="Genome Res.">
        <title>Massive genome erosion and functional adaptations provide insights into the symbiotic lifestyle of Sodalis glossinidius in the tsetse host.</title>
        <authorList>
            <person name="Toh H."/>
            <person name="Weiss B.L."/>
            <person name="Perkin S.A.H."/>
            <person name="Yamashita A."/>
            <person name="Oshima K."/>
            <person name="Hattori M."/>
            <person name="Aksoy S."/>
        </authorList>
    </citation>
    <scope>NUCLEOTIDE SEQUENCE [LARGE SCALE GENOMIC DNA]</scope>
    <source>
        <strain>morsitans</strain>
    </source>
</reference>
<protein>
    <recommendedName>
        <fullName evidence="1">UDP-N-acetylmuramoyl-L-alanyl-D-glutamate--2,6-diaminopimelate ligase</fullName>
        <ecNumber evidence="1">6.3.2.13</ecNumber>
    </recommendedName>
    <alternativeName>
        <fullName evidence="1">Meso-A2pm-adding enzyme</fullName>
    </alternativeName>
    <alternativeName>
        <fullName evidence="1">Meso-diaminopimelate-adding enzyme</fullName>
    </alternativeName>
    <alternativeName>
        <fullName evidence="1">UDP-MurNAc-L-Ala-D-Glu:meso-diaminopimelate ligase</fullName>
    </alternativeName>
    <alternativeName>
        <fullName evidence="1">UDP-MurNAc-tripeptide synthetase</fullName>
    </alternativeName>
    <alternativeName>
        <fullName evidence="1">UDP-N-acetylmuramyl-tripeptide synthetase</fullName>
    </alternativeName>
</protein>
<feature type="chain" id="PRO_1000012378" description="UDP-N-acetylmuramoyl-L-alanyl-D-glutamate--2,6-diaminopimelate ligase">
    <location>
        <begin position="1"/>
        <end position="495"/>
    </location>
</feature>
<feature type="short sequence motif" description="Meso-diaminopimelate recognition motif">
    <location>
        <begin position="414"/>
        <end position="417"/>
    </location>
</feature>
<feature type="binding site" evidence="1">
    <location>
        <position position="27"/>
    </location>
    <ligand>
        <name>UDP-N-acetyl-alpha-D-muramoyl-L-alanyl-D-glutamate</name>
        <dbReference type="ChEBI" id="CHEBI:83900"/>
    </ligand>
</feature>
<feature type="binding site" evidence="1">
    <location>
        <position position="29"/>
    </location>
    <ligand>
        <name>UDP-N-acetyl-alpha-D-muramoyl-L-alanyl-D-glutamate</name>
        <dbReference type="ChEBI" id="CHEBI:83900"/>
    </ligand>
</feature>
<feature type="binding site" evidence="1">
    <location>
        <begin position="44"/>
        <end position="46"/>
    </location>
    <ligand>
        <name>UDP-N-acetyl-alpha-D-muramoyl-L-alanyl-D-glutamate</name>
        <dbReference type="ChEBI" id="CHEBI:83900"/>
    </ligand>
</feature>
<feature type="binding site" evidence="1">
    <location>
        <begin position="116"/>
        <end position="122"/>
    </location>
    <ligand>
        <name>ATP</name>
        <dbReference type="ChEBI" id="CHEBI:30616"/>
    </ligand>
</feature>
<feature type="binding site" evidence="1">
    <location>
        <position position="157"/>
    </location>
    <ligand>
        <name>UDP-N-acetyl-alpha-D-muramoyl-L-alanyl-D-glutamate</name>
        <dbReference type="ChEBI" id="CHEBI:83900"/>
    </ligand>
</feature>
<feature type="binding site" evidence="1">
    <location>
        <begin position="158"/>
        <end position="159"/>
    </location>
    <ligand>
        <name>UDP-N-acetyl-alpha-D-muramoyl-L-alanyl-D-glutamate</name>
        <dbReference type="ChEBI" id="CHEBI:83900"/>
    </ligand>
</feature>
<feature type="binding site" evidence="1">
    <location>
        <position position="185"/>
    </location>
    <ligand>
        <name>UDP-N-acetyl-alpha-D-muramoyl-L-alanyl-D-glutamate</name>
        <dbReference type="ChEBI" id="CHEBI:83900"/>
    </ligand>
</feature>
<feature type="binding site" evidence="1">
    <location>
        <position position="191"/>
    </location>
    <ligand>
        <name>UDP-N-acetyl-alpha-D-muramoyl-L-alanyl-D-glutamate</name>
        <dbReference type="ChEBI" id="CHEBI:83900"/>
    </ligand>
</feature>
<feature type="binding site" evidence="1">
    <location>
        <position position="193"/>
    </location>
    <ligand>
        <name>UDP-N-acetyl-alpha-D-muramoyl-L-alanyl-D-glutamate</name>
        <dbReference type="ChEBI" id="CHEBI:83900"/>
    </ligand>
</feature>
<feature type="binding site" evidence="1">
    <location>
        <position position="390"/>
    </location>
    <ligand>
        <name>meso-2,6-diaminopimelate</name>
        <dbReference type="ChEBI" id="CHEBI:57791"/>
    </ligand>
</feature>
<feature type="binding site" evidence="1">
    <location>
        <begin position="414"/>
        <end position="417"/>
    </location>
    <ligand>
        <name>meso-2,6-diaminopimelate</name>
        <dbReference type="ChEBI" id="CHEBI:57791"/>
    </ligand>
</feature>
<feature type="binding site" evidence="1">
    <location>
        <position position="465"/>
    </location>
    <ligand>
        <name>meso-2,6-diaminopimelate</name>
        <dbReference type="ChEBI" id="CHEBI:57791"/>
    </ligand>
</feature>
<feature type="binding site" evidence="1">
    <location>
        <position position="469"/>
    </location>
    <ligand>
        <name>meso-2,6-diaminopimelate</name>
        <dbReference type="ChEBI" id="CHEBI:57791"/>
    </ligand>
</feature>
<feature type="modified residue" description="N6-carboxylysine" evidence="1">
    <location>
        <position position="225"/>
    </location>
</feature>
<name>MURE_SODGM</name>
<gene>
    <name evidence="1" type="primary">murE</name>
    <name type="ordered locus">SG0444</name>
</gene>
<comment type="function">
    <text evidence="1">Catalyzes the addition of meso-diaminopimelic acid to the nucleotide precursor UDP-N-acetylmuramoyl-L-alanyl-D-glutamate (UMAG) in the biosynthesis of bacterial cell-wall peptidoglycan.</text>
</comment>
<comment type="catalytic activity">
    <reaction evidence="1">
        <text>UDP-N-acetyl-alpha-D-muramoyl-L-alanyl-D-glutamate + meso-2,6-diaminopimelate + ATP = UDP-N-acetyl-alpha-D-muramoyl-L-alanyl-gamma-D-glutamyl-meso-2,6-diaminopimelate + ADP + phosphate + H(+)</text>
        <dbReference type="Rhea" id="RHEA:23676"/>
        <dbReference type="ChEBI" id="CHEBI:15378"/>
        <dbReference type="ChEBI" id="CHEBI:30616"/>
        <dbReference type="ChEBI" id="CHEBI:43474"/>
        <dbReference type="ChEBI" id="CHEBI:57791"/>
        <dbReference type="ChEBI" id="CHEBI:83900"/>
        <dbReference type="ChEBI" id="CHEBI:83905"/>
        <dbReference type="ChEBI" id="CHEBI:456216"/>
        <dbReference type="EC" id="6.3.2.13"/>
    </reaction>
</comment>
<comment type="cofactor">
    <cofactor evidence="1">
        <name>Mg(2+)</name>
        <dbReference type="ChEBI" id="CHEBI:18420"/>
    </cofactor>
</comment>
<comment type="pathway">
    <text evidence="1">Cell wall biogenesis; peptidoglycan biosynthesis.</text>
</comment>
<comment type="subcellular location">
    <subcellularLocation>
        <location evidence="1">Cytoplasm</location>
    </subcellularLocation>
</comment>
<comment type="PTM">
    <text evidence="1">Carboxylation is probably crucial for Mg(2+) binding and, consequently, for the gamma-phosphate positioning of ATP.</text>
</comment>
<comment type="similarity">
    <text evidence="1">Belongs to the MurCDEF family. MurE subfamily.</text>
</comment>
<sequence>MTDRNLRELLAPWVPNAPGRVLREMTLDSRTAAAGDLFVAVAGHQTDGRRYIPQAIAQGVAAVVAQAEGEAEEGEIRELHGVPVIYLHRLQERLSALAGRFYQQPLHALRLTGVTGTNGKTTTTHLLAQWAQLLGETSAVMGTVGNGVLGHIHPADNTTGSPIEVQQLLLQLQRQGATFAAMEVSSHGLVQHRVSILHFAAAVFTNLSRDHLDYHGDMAQYEAAKWRLFGELDVGQRIINADDATGRRWLQKLPQAIAVAVSGTLPPERQGDWLCAGEVRYHARGADIPFRSSWGEGIVHCQLIGEFNVSNLLLALTTLLALGYPLPALLDSASRLQSICGRMEVFHAEDRPTVLVDYAHTPDALEKALTAARLHCHGKLWCVFGCGGDRDKGKRPLMGAIAEQYADRVIITDDNPRGEAAQDIINDIKSGLLDAGRAQVISGRAEAVTSAIMQAAPADLVLVAGKGHEDYQIIGKQRLDYSDRTTVARLLGVMA</sequence>
<organism>
    <name type="scientific">Sodalis glossinidius (strain morsitans)</name>
    <dbReference type="NCBI Taxonomy" id="343509"/>
    <lineage>
        <taxon>Bacteria</taxon>
        <taxon>Pseudomonadati</taxon>
        <taxon>Pseudomonadota</taxon>
        <taxon>Gammaproteobacteria</taxon>
        <taxon>Enterobacterales</taxon>
        <taxon>Bruguierivoracaceae</taxon>
        <taxon>Sodalis</taxon>
    </lineage>
</organism>
<accession>Q2NVV6</accession>
<keyword id="KW-0067">ATP-binding</keyword>
<keyword id="KW-0131">Cell cycle</keyword>
<keyword id="KW-0132">Cell division</keyword>
<keyword id="KW-0133">Cell shape</keyword>
<keyword id="KW-0961">Cell wall biogenesis/degradation</keyword>
<keyword id="KW-0963">Cytoplasm</keyword>
<keyword id="KW-0436">Ligase</keyword>
<keyword id="KW-0460">Magnesium</keyword>
<keyword id="KW-0547">Nucleotide-binding</keyword>
<keyword id="KW-0573">Peptidoglycan synthesis</keyword>
<dbReference type="EC" id="6.3.2.13" evidence="1"/>
<dbReference type="EMBL" id="AP008232">
    <property type="protein sequence ID" value="BAE73719.1"/>
    <property type="molecule type" value="Genomic_DNA"/>
</dbReference>
<dbReference type="RefSeq" id="WP_011410417.1">
    <property type="nucleotide sequence ID" value="NC_007712.1"/>
</dbReference>
<dbReference type="SMR" id="Q2NVV6"/>
<dbReference type="STRING" id="343509.SG0444"/>
<dbReference type="KEGG" id="sgl:SG0444"/>
<dbReference type="eggNOG" id="COG0769">
    <property type="taxonomic scope" value="Bacteria"/>
</dbReference>
<dbReference type="HOGENOM" id="CLU_022291_3_2_6"/>
<dbReference type="OrthoDB" id="9800958at2"/>
<dbReference type="BioCyc" id="SGLO343509:SGP1_RS03990-MONOMER"/>
<dbReference type="UniPathway" id="UPA00219"/>
<dbReference type="Proteomes" id="UP000001932">
    <property type="component" value="Chromosome"/>
</dbReference>
<dbReference type="GO" id="GO:0005737">
    <property type="term" value="C:cytoplasm"/>
    <property type="evidence" value="ECO:0007669"/>
    <property type="project" value="UniProtKB-SubCell"/>
</dbReference>
<dbReference type="GO" id="GO:0005524">
    <property type="term" value="F:ATP binding"/>
    <property type="evidence" value="ECO:0007669"/>
    <property type="project" value="UniProtKB-UniRule"/>
</dbReference>
<dbReference type="GO" id="GO:0000287">
    <property type="term" value="F:magnesium ion binding"/>
    <property type="evidence" value="ECO:0007669"/>
    <property type="project" value="UniProtKB-UniRule"/>
</dbReference>
<dbReference type="GO" id="GO:0008765">
    <property type="term" value="F:UDP-N-acetylmuramoylalanyl-D-glutamate-2,6-diaminopimelate ligase activity"/>
    <property type="evidence" value="ECO:0007669"/>
    <property type="project" value="UniProtKB-UniRule"/>
</dbReference>
<dbReference type="GO" id="GO:0051301">
    <property type="term" value="P:cell division"/>
    <property type="evidence" value="ECO:0007669"/>
    <property type="project" value="UniProtKB-KW"/>
</dbReference>
<dbReference type="GO" id="GO:0071555">
    <property type="term" value="P:cell wall organization"/>
    <property type="evidence" value="ECO:0007669"/>
    <property type="project" value="UniProtKB-KW"/>
</dbReference>
<dbReference type="GO" id="GO:0009252">
    <property type="term" value="P:peptidoglycan biosynthetic process"/>
    <property type="evidence" value="ECO:0007669"/>
    <property type="project" value="UniProtKB-UniRule"/>
</dbReference>
<dbReference type="GO" id="GO:0008360">
    <property type="term" value="P:regulation of cell shape"/>
    <property type="evidence" value="ECO:0007669"/>
    <property type="project" value="UniProtKB-KW"/>
</dbReference>
<dbReference type="FunFam" id="3.90.190.20:FF:000006">
    <property type="entry name" value="UDP-N-acetylmuramoyl-L-alanyl-D-glutamate--2,6-diaminopimelate ligase"/>
    <property type="match status" value="1"/>
</dbReference>
<dbReference type="Gene3D" id="3.90.190.20">
    <property type="entry name" value="Mur ligase, C-terminal domain"/>
    <property type="match status" value="1"/>
</dbReference>
<dbReference type="Gene3D" id="3.40.1190.10">
    <property type="entry name" value="Mur-like, catalytic domain"/>
    <property type="match status" value="1"/>
</dbReference>
<dbReference type="Gene3D" id="3.40.1390.10">
    <property type="entry name" value="MurE/MurF, N-terminal domain"/>
    <property type="match status" value="1"/>
</dbReference>
<dbReference type="HAMAP" id="MF_00208">
    <property type="entry name" value="MurE"/>
    <property type="match status" value="1"/>
</dbReference>
<dbReference type="InterPro" id="IPR036565">
    <property type="entry name" value="Mur-like_cat_sf"/>
</dbReference>
<dbReference type="InterPro" id="IPR004101">
    <property type="entry name" value="Mur_ligase_C"/>
</dbReference>
<dbReference type="InterPro" id="IPR036615">
    <property type="entry name" value="Mur_ligase_C_dom_sf"/>
</dbReference>
<dbReference type="InterPro" id="IPR013221">
    <property type="entry name" value="Mur_ligase_cen"/>
</dbReference>
<dbReference type="InterPro" id="IPR000713">
    <property type="entry name" value="Mur_ligase_N"/>
</dbReference>
<dbReference type="InterPro" id="IPR035911">
    <property type="entry name" value="MurE/MurF_N"/>
</dbReference>
<dbReference type="InterPro" id="IPR005761">
    <property type="entry name" value="UDP-N-AcMur-Glu-dNH2Pim_ligase"/>
</dbReference>
<dbReference type="NCBIfam" id="TIGR01085">
    <property type="entry name" value="murE"/>
    <property type="match status" value="1"/>
</dbReference>
<dbReference type="NCBIfam" id="NF001123">
    <property type="entry name" value="PRK00139.1-1"/>
    <property type="match status" value="1"/>
</dbReference>
<dbReference type="NCBIfam" id="NF001126">
    <property type="entry name" value="PRK00139.1-4"/>
    <property type="match status" value="1"/>
</dbReference>
<dbReference type="PANTHER" id="PTHR23135">
    <property type="entry name" value="MUR LIGASE FAMILY MEMBER"/>
    <property type="match status" value="1"/>
</dbReference>
<dbReference type="PANTHER" id="PTHR23135:SF4">
    <property type="entry name" value="UDP-N-ACETYLMURAMOYL-L-ALANYL-D-GLUTAMATE--2,6-DIAMINOPIMELATE LIGASE MURE HOMOLOG, CHLOROPLASTIC"/>
    <property type="match status" value="1"/>
</dbReference>
<dbReference type="Pfam" id="PF01225">
    <property type="entry name" value="Mur_ligase"/>
    <property type="match status" value="1"/>
</dbReference>
<dbReference type="Pfam" id="PF02875">
    <property type="entry name" value="Mur_ligase_C"/>
    <property type="match status" value="1"/>
</dbReference>
<dbReference type="Pfam" id="PF08245">
    <property type="entry name" value="Mur_ligase_M"/>
    <property type="match status" value="1"/>
</dbReference>
<dbReference type="SUPFAM" id="SSF53623">
    <property type="entry name" value="MurD-like peptide ligases, catalytic domain"/>
    <property type="match status" value="1"/>
</dbReference>
<dbReference type="SUPFAM" id="SSF53244">
    <property type="entry name" value="MurD-like peptide ligases, peptide-binding domain"/>
    <property type="match status" value="1"/>
</dbReference>
<dbReference type="SUPFAM" id="SSF63418">
    <property type="entry name" value="MurE/MurF N-terminal domain"/>
    <property type="match status" value="1"/>
</dbReference>